<gene>
    <name evidence="1" type="primary">Mlac1</name>
    <name evidence="7" type="synonym">Abr2</name>
    <name type="ORF">MAM_08216</name>
</gene>
<feature type="signal peptide" evidence="4">
    <location>
        <begin position="1"/>
        <end position="20"/>
    </location>
</feature>
<feature type="chain" id="PRO_5002096638" description="Laccase 1">
    <location>
        <begin position="21"/>
        <end position="602"/>
    </location>
</feature>
<feature type="domain" description="Plastocyanin-like 1" evidence="4">
    <location>
        <begin position="30"/>
        <end position="128"/>
    </location>
</feature>
<feature type="domain" description="Plastocyanin-like 2" evidence="4">
    <location>
        <begin position="157"/>
        <end position="345"/>
    </location>
</feature>
<feature type="domain" description="Plastocyanin-like 3" evidence="4">
    <location>
        <begin position="461"/>
        <end position="584"/>
    </location>
</feature>
<feature type="binding site" evidence="3">
    <location>
        <position position="78"/>
    </location>
    <ligand>
        <name>Cu cation</name>
        <dbReference type="ChEBI" id="CHEBI:23378"/>
        <label>1</label>
    </ligand>
</feature>
<feature type="binding site" evidence="3">
    <location>
        <position position="80"/>
    </location>
    <ligand>
        <name>Cu cation</name>
        <dbReference type="ChEBI" id="CHEBI:23378"/>
        <label>2</label>
    </ligand>
</feature>
<feature type="binding site" evidence="3">
    <location>
        <position position="108"/>
    </location>
    <ligand>
        <name>Cu cation</name>
        <dbReference type="ChEBI" id="CHEBI:23378"/>
        <label>2</label>
    </ligand>
</feature>
<feature type="binding site" evidence="3">
    <location>
        <position position="110"/>
    </location>
    <ligand>
        <name>Cu cation</name>
        <dbReference type="ChEBI" id="CHEBI:23378"/>
        <label>3</label>
    </ligand>
</feature>
<feature type="binding site" evidence="3">
    <location>
        <position position="492"/>
    </location>
    <ligand>
        <name>Cu cation</name>
        <dbReference type="ChEBI" id="CHEBI:23378"/>
        <label>4</label>
    </ligand>
</feature>
<feature type="binding site" evidence="3">
    <location>
        <position position="495"/>
    </location>
    <ligand>
        <name>Cu cation</name>
        <dbReference type="ChEBI" id="CHEBI:23378"/>
        <label>1</label>
    </ligand>
</feature>
<feature type="binding site" evidence="3">
    <location>
        <position position="495"/>
    </location>
    <ligand>
        <name>Cu cation</name>
        <dbReference type="ChEBI" id="CHEBI:23378"/>
        <label>4</label>
    </ligand>
</feature>
<feature type="binding site" evidence="3">
    <location>
        <position position="497"/>
    </location>
    <ligand>
        <name>Cu cation</name>
        <dbReference type="ChEBI" id="CHEBI:23378"/>
        <label>3</label>
    </ligand>
</feature>
<feature type="binding site" evidence="3">
    <location>
        <position position="566"/>
    </location>
    <ligand>
        <name>Cu cation</name>
        <dbReference type="ChEBI" id="CHEBI:23378"/>
        <label>3</label>
    </ligand>
</feature>
<feature type="binding site" evidence="3">
    <location>
        <position position="567"/>
    </location>
    <ligand>
        <name>Cu cation</name>
        <dbReference type="ChEBI" id="CHEBI:23378"/>
        <label>4</label>
    </ligand>
</feature>
<feature type="binding site" evidence="3">
    <location>
        <position position="568"/>
    </location>
    <ligand>
        <name>Cu cation</name>
        <dbReference type="ChEBI" id="CHEBI:23378"/>
        <label>2</label>
    </ligand>
</feature>
<feature type="binding site" evidence="3">
    <location>
        <position position="572"/>
    </location>
    <ligand>
        <name>Cu cation</name>
        <dbReference type="ChEBI" id="CHEBI:23378"/>
        <label>4</label>
    </ligand>
</feature>
<feature type="glycosylation site" description="N-linked (GlcNAc...) asparagine" evidence="5">
    <location>
        <position position="176"/>
    </location>
</feature>
<feature type="glycosylation site" description="N-linked (GlcNAc...) asparagine" evidence="5">
    <location>
        <position position="241"/>
    </location>
</feature>
<feature type="glycosylation site" description="N-linked (GlcNAc...) asparagine" evidence="5">
    <location>
        <position position="264"/>
    </location>
</feature>
<feature type="glycosylation site" description="N-linked (GlcNAc...) asparagine" evidence="5">
    <location>
        <position position="388"/>
    </location>
</feature>
<feature type="glycosylation site" description="N-linked (GlcNAc...) asparagine" evidence="5">
    <location>
        <position position="430"/>
    </location>
</feature>
<feature type="glycosylation site" description="N-linked (GlcNAc...) asparagine" evidence="5">
    <location>
        <position position="454"/>
    </location>
</feature>
<feature type="glycosylation site" description="N-linked (GlcNAc...) asparagine" evidence="5">
    <location>
        <position position="470"/>
    </location>
</feature>
<feature type="glycosylation site" description="N-linked (GlcNAc...) asparagine" evidence="5">
    <location>
        <position position="512"/>
    </location>
</feature>
<proteinExistence type="inferred from homology"/>
<reference key="1">
    <citation type="journal article" date="2014" name="Proc. Natl. Acad. Sci. U.S.A.">
        <title>Trajectory and genomic determinants of fungal-pathogen speciation and host adaptation.</title>
        <authorList>
            <person name="Hu X."/>
            <person name="Xiao G."/>
            <person name="Zheng P."/>
            <person name="Shang Y."/>
            <person name="Su Y."/>
            <person name="Zhang X."/>
            <person name="Liu X."/>
            <person name="Zhan S."/>
            <person name="St Leger R.J."/>
            <person name="Wang C."/>
        </authorList>
    </citation>
    <scope>NUCLEOTIDE SEQUENCE [LARGE SCALE GENOMIC DNA]</scope>
    <source>
        <strain>ARSEF 1941</strain>
    </source>
</reference>
<reference key="2">
    <citation type="journal article" date="2018" name="PLoS Genet.">
        <title>Duplication of a Pks gene cluster and subsequent functional diversification facilitate environmental adaptation in Metarhizium species.</title>
        <authorList>
            <person name="Zeng G."/>
            <person name="Zhang P."/>
            <person name="Zhang Q."/>
            <person name="Zhao H."/>
            <person name="Li Z."/>
            <person name="Zhang X."/>
            <person name="Wang C."/>
            <person name="Yin W.B."/>
            <person name="Fang W."/>
        </authorList>
    </citation>
    <scope>IDENTIFICATION</scope>
    <scope>FUNCTION</scope>
    <scope>PATHWAY</scope>
</reference>
<sequence>MDHFARVSLVAALLYTNTWAKTVRETLRITWEEGAPNGQQRELIYINGRFPGPNLVWDEDDDVEVTVINDMTQSVTVHWHGLDQRPIQPGDSFVHKFKAFPPGNHWYHSHQKMSLVDGLYGAVHVRPKGDRKGLWSQISQDDKDIEAMEKAACDPEYLVVSDWSQYTSDEYWKISNDSGLPVFCLDSILVNGKGEVYCPGQKFLQGELAPGVLDAFPPGTEVSDKGCFSPALDRIKGGPWNMTERPDLIPPHVETGCVASRHENETIVVDPGRNNGWVSMHIVAAATIAQIAISFDSHKFWLYEVDGNYVNPREYFSAIISAGETFSIMMKLDQEPGRYTVRIPNTGASQVFSAFAEMVYKGHEENDKKLGEARLSYGGVPTSPEIKNNSYFPWKLDTDHMSPWPPSTPRPGNADEEHLLVLGRVGSPNNHTMNAKYLYPLGFRDEEPLLFYPNATLGTENEGLLLRTRNASWVDLIMQVSTLAGDEVAFKHFIHKHGGKTWRIGFGTGVWNYSSVQEAIQARPNDFNLETPGFRDTWITAPSASGEKHWSVLRYYVDNPGPWLLHCHIELHLMGGMGMVIMDGVDAWPDQLPEQYRLGKRL</sequence>
<protein>
    <recommendedName>
        <fullName evidence="1">Laccase 1</fullName>
        <ecNumber evidence="9">1.10.3.-</ecNumber>
    </recommendedName>
    <alternativeName>
        <fullName evidence="1">Conidial pigment biosynthesis oxidase Mlac1</fullName>
    </alternativeName>
</protein>
<dbReference type="EC" id="1.10.3.-" evidence="9"/>
<dbReference type="EMBL" id="AZHE01000047">
    <property type="protein sequence ID" value="KHN93909.1"/>
    <property type="molecule type" value="Genomic_DNA"/>
</dbReference>
<dbReference type="SMR" id="A0A0B2WJN5"/>
<dbReference type="STRING" id="1081103.A0A0B2WJN5"/>
<dbReference type="GlyCosmos" id="A0A0B2WJN5">
    <property type="glycosylation" value="8 sites, No reported glycans"/>
</dbReference>
<dbReference type="HOGENOM" id="CLU_006504_5_0_1"/>
<dbReference type="OrthoDB" id="2121828at2759"/>
<dbReference type="Proteomes" id="UP000030816">
    <property type="component" value="Unassembled WGS sequence"/>
</dbReference>
<dbReference type="GO" id="GO:0009986">
    <property type="term" value="C:cell surface"/>
    <property type="evidence" value="ECO:0007669"/>
    <property type="project" value="UniProtKB-SubCell"/>
</dbReference>
<dbReference type="GO" id="GO:0005507">
    <property type="term" value="F:copper ion binding"/>
    <property type="evidence" value="ECO:0007669"/>
    <property type="project" value="InterPro"/>
</dbReference>
<dbReference type="GO" id="GO:0016491">
    <property type="term" value="F:oxidoreductase activity"/>
    <property type="evidence" value="ECO:0007669"/>
    <property type="project" value="UniProtKB-KW"/>
</dbReference>
<dbReference type="CDD" id="cd13898">
    <property type="entry name" value="CuRO_3_Abr2_like"/>
    <property type="match status" value="1"/>
</dbReference>
<dbReference type="Gene3D" id="2.60.40.420">
    <property type="entry name" value="Cupredoxins - blue copper proteins"/>
    <property type="match status" value="3"/>
</dbReference>
<dbReference type="InterPro" id="IPR011707">
    <property type="entry name" value="Cu-oxidase-like_N"/>
</dbReference>
<dbReference type="InterPro" id="IPR001117">
    <property type="entry name" value="Cu-oxidase_2nd"/>
</dbReference>
<dbReference type="InterPro" id="IPR011706">
    <property type="entry name" value="Cu-oxidase_C"/>
</dbReference>
<dbReference type="InterPro" id="IPR045087">
    <property type="entry name" value="Cu-oxidase_fam"/>
</dbReference>
<dbReference type="InterPro" id="IPR033138">
    <property type="entry name" value="Cu_oxidase_CS"/>
</dbReference>
<dbReference type="InterPro" id="IPR002355">
    <property type="entry name" value="Cu_oxidase_Cu_BS"/>
</dbReference>
<dbReference type="InterPro" id="IPR008972">
    <property type="entry name" value="Cupredoxin"/>
</dbReference>
<dbReference type="PANTHER" id="PTHR11709:SF488">
    <property type="entry name" value="LACCASE-RELATED"/>
    <property type="match status" value="1"/>
</dbReference>
<dbReference type="PANTHER" id="PTHR11709">
    <property type="entry name" value="MULTI-COPPER OXIDASE"/>
    <property type="match status" value="1"/>
</dbReference>
<dbReference type="Pfam" id="PF00394">
    <property type="entry name" value="Cu-oxidase"/>
    <property type="match status" value="1"/>
</dbReference>
<dbReference type="Pfam" id="PF07731">
    <property type="entry name" value="Cu-oxidase_2"/>
    <property type="match status" value="1"/>
</dbReference>
<dbReference type="Pfam" id="PF07732">
    <property type="entry name" value="Cu-oxidase_3"/>
    <property type="match status" value="1"/>
</dbReference>
<dbReference type="SUPFAM" id="SSF49503">
    <property type="entry name" value="Cupredoxins"/>
    <property type="match status" value="3"/>
</dbReference>
<dbReference type="PROSITE" id="PS00079">
    <property type="entry name" value="MULTICOPPER_OXIDASE1"/>
    <property type="match status" value="1"/>
</dbReference>
<dbReference type="PROSITE" id="PS00080">
    <property type="entry name" value="MULTICOPPER_OXIDASE2"/>
    <property type="match status" value="1"/>
</dbReference>
<keyword id="KW-0186">Copper</keyword>
<keyword id="KW-0325">Glycoprotein</keyword>
<keyword id="KW-0479">Metal-binding</keyword>
<keyword id="KW-0560">Oxidoreductase</keyword>
<keyword id="KW-1185">Reference proteome</keyword>
<keyword id="KW-0677">Repeat</keyword>
<keyword id="KW-0732">Signal</keyword>
<name>MLAC1_METAS</name>
<accession>A0A0B2WJN5</accession>
<evidence type="ECO:0000250" key="1">
    <source>
        <dbReference type="UniProtKB" id="E9F648"/>
    </source>
</evidence>
<evidence type="ECO:0000250" key="2">
    <source>
        <dbReference type="UniProtKB" id="E9RBR0"/>
    </source>
</evidence>
<evidence type="ECO:0000250" key="3">
    <source>
        <dbReference type="UniProtKB" id="Q70KY3"/>
    </source>
</evidence>
<evidence type="ECO:0000255" key="4"/>
<evidence type="ECO:0000255" key="5">
    <source>
        <dbReference type="PROSITE-ProRule" id="PRU00498"/>
    </source>
</evidence>
<evidence type="ECO:0000269" key="6">
    <source>
    </source>
</evidence>
<evidence type="ECO:0000303" key="7">
    <source>
    </source>
</evidence>
<evidence type="ECO:0000305" key="8"/>
<evidence type="ECO:0000305" key="9">
    <source>
    </source>
</evidence>
<organism>
    <name type="scientific">Metarhizium album (strain ARSEF 1941)</name>
    <dbReference type="NCBI Taxonomy" id="1081103"/>
    <lineage>
        <taxon>Eukaryota</taxon>
        <taxon>Fungi</taxon>
        <taxon>Dikarya</taxon>
        <taxon>Ascomycota</taxon>
        <taxon>Pezizomycotina</taxon>
        <taxon>Sordariomycetes</taxon>
        <taxon>Hypocreomycetidae</taxon>
        <taxon>Hypocreales</taxon>
        <taxon>Clavicipitaceae</taxon>
        <taxon>Metarhizium</taxon>
    </lineage>
</organism>
<comment type="function">
    <text evidence="6 9">Laccase; part of the Pks1 gene cluster that mediates the biosynthesis of an anthraquinone derivative pigment that contributes to conidial pigmentation that provides protection from UV radiation, heat and cold stress (PubMed:29958281). The polyketide synthase Pks1 produces 1-acetyl-2,4,6,8-tetrahydroxy-9,10-anthraquinone though condensation of acetyl-CoA with malonyl-CoA (Probable). The dehydratase EthD and the laccase Mlac1 further convert the anthraquinone derivative into the final conidial pigment (Probable).</text>
</comment>
<comment type="cofactor">
    <cofactor evidence="3">
        <name>Cu cation</name>
        <dbReference type="ChEBI" id="CHEBI:23378"/>
    </cofactor>
    <text evidence="3">Binds 4 Cu cations per monomer.</text>
</comment>
<comment type="pathway">
    <text evidence="9">Pigment biosynthesis.</text>
</comment>
<comment type="subcellular location">
    <subcellularLocation>
        <location evidence="2">Cell surface</location>
    </subcellularLocation>
</comment>
<comment type="similarity">
    <text evidence="8">Belongs to the multicopper oxidase family.</text>
</comment>